<gene>
    <name type="primary">cry</name>
    <name type="synonym">phrB2</name>
    <name type="ordered locus">IL0122</name>
</gene>
<comment type="function">
    <text evidence="1">May have a photoreceptor function. Binds DNA; probably functions as a transcriptional repressor (By similarity).</text>
</comment>
<comment type="cofactor">
    <cofactor evidence="1">
        <name>FAD</name>
        <dbReference type="ChEBI" id="CHEBI:57692"/>
    </cofactor>
    <text evidence="1">Binds 1 FAD per subunit.</text>
</comment>
<comment type="cofactor">
    <cofactor evidence="1">
        <name>(6R)-5,10-methylene-5,6,7,8-tetrahydrofolate</name>
        <dbReference type="ChEBI" id="CHEBI:15636"/>
    </cofactor>
    <text evidence="1">Binds 1 5,10-methenyltetrahydrofolate (MTHF) per subunit.</text>
</comment>
<comment type="similarity">
    <text evidence="2">Belongs to the DNA photolyase class-1 family.</text>
</comment>
<accession>Q5QXE0</accession>
<evidence type="ECO:0000250" key="1"/>
<evidence type="ECO:0000305" key="2"/>
<dbReference type="EMBL" id="AE017340">
    <property type="protein sequence ID" value="AAV80965.1"/>
    <property type="molecule type" value="Genomic_DNA"/>
</dbReference>
<dbReference type="RefSeq" id="WP_011233385.1">
    <property type="nucleotide sequence ID" value="NC_006512.1"/>
</dbReference>
<dbReference type="SMR" id="Q5QXE0"/>
<dbReference type="STRING" id="283942.IL0122"/>
<dbReference type="GeneID" id="41335268"/>
<dbReference type="KEGG" id="ilo:IL0122"/>
<dbReference type="eggNOG" id="COG0415">
    <property type="taxonomic scope" value="Bacteria"/>
</dbReference>
<dbReference type="HOGENOM" id="CLU_010348_6_2_6"/>
<dbReference type="OrthoDB" id="9772484at2"/>
<dbReference type="Proteomes" id="UP000001171">
    <property type="component" value="Chromosome"/>
</dbReference>
<dbReference type="GO" id="GO:0003677">
    <property type="term" value="F:DNA binding"/>
    <property type="evidence" value="ECO:0007669"/>
    <property type="project" value="UniProtKB-KW"/>
</dbReference>
<dbReference type="GO" id="GO:0003913">
    <property type="term" value="F:DNA photolyase activity"/>
    <property type="evidence" value="ECO:0007669"/>
    <property type="project" value="InterPro"/>
</dbReference>
<dbReference type="GO" id="GO:0071949">
    <property type="term" value="F:FAD binding"/>
    <property type="evidence" value="ECO:0007669"/>
    <property type="project" value="TreeGrafter"/>
</dbReference>
<dbReference type="GO" id="GO:0000719">
    <property type="term" value="P:photoreactive repair"/>
    <property type="evidence" value="ECO:0007669"/>
    <property type="project" value="TreeGrafter"/>
</dbReference>
<dbReference type="Gene3D" id="1.25.40.80">
    <property type="match status" value="1"/>
</dbReference>
<dbReference type="Gene3D" id="1.10.579.10">
    <property type="entry name" value="DNA Cyclobutane Dipyrimidine Photolyase, subunit A, domain 3"/>
    <property type="match status" value="1"/>
</dbReference>
<dbReference type="Gene3D" id="3.40.50.620">
    <property type="entry name" value="HUPs"/>
    <property type="match status" value="1"/>
</dbReference>
<dbReference type="InterPro" id="IPR014133">
    <property type="entry name" value="Cry_DASH"/>
</dbReference>
<dbReference type="InterPro" id="IPR036134">
    <property type="entry name" value="Crypto/Photolyase_FAD-like_sf"/>
</dbReference>
<dbReference type="InterPro" id="IPR036155">
    <property type="entry name" value="Crypto/Photolyase_N_sf"/>
</dbReference>
<dbReference type="InterPro" id="IPR005101">
    <property type="entry name" value="Cryptochr/Photolyase_FAD-bd"/>
</dbReference>
<dbReference type="InterPro" id="IPR002081">
    <property type="entry name" value="Cryptochrome/DNA_photolyase_1"/>
</dbReference>
<dbReference type="InterPro" id="IPR006050">
    <property type="entry name" value="DNA_photolyase_N"/>
</dbReference>
<dbReference type="InterPro" id="IPR014729">
    <property type="entry name" value="Rossmann-like_a/b/a_fold"/>
</dbReference>
<dbReference type="NCBIfam" id="TIGR02765">
    <property type="entry name" value="crypto_DASH"/>
    <property type="match status" value="1"/>
</dbReference>
<dbReference type="PANTHER" id="PTHR11455">
    <property type="entry name" value="CRYPTOCHROME"/>
    <property type="match status" value="1"/>
</dbReference>
<dbReference type="PANTHER" id="PTHR11455:SF22">
    <property type="entry name" value="CRYPTOCHROME DASH"/>
    <property type="match status" value="1"/>
</dbReference>
<dbReference type="Pfam" id="PF00875">
    <property type="entry name" value="DNA_photolyase"/>
    <property type="match status" value="1"/>
</dbReference>
<dbReference type="Pfam" id="PF03441">
    <property type="entry name" value="FAD_binding_7"/>
    <property type="match status" value="1"/>
</dbReference>
<dbReference type="PRINTS" id="PR00147">
    <property type="entry name" value="DNAPHOTLYASE"/>
</dbReference>
<dbReference type="SUPFAM" id="SSF48173">
    <property type="entry name" value="Cryptochrome/photolyase FAD-binding domain"/>
    <property type="match status" value="1"/>
</dbReference>
<dbReference type="SUPFAM" id="SSF52425">
    <property type="entry name" value="Cryptochrome/photolyase, N-terminal domain"/>
    <property type="match status" value="1"/>
</dbReference>
<dbReference type="PROSITE" id="PS51645">
    <property type="entry name" value="PHR_CRY_ALPHA_BETA"/>
    <property type="match status" value="1"/>
</dbReference>
<organism>
    <name type="scientific">Idiomarina loihiensis (strain ATCC BAA-735 / DSM 15497 / L2-TR)</name>
    <dbReference type="NCBI Taxonomy" id="283942"/>
    <lineage>
        <taxon>Bacteria</taxon>
        <taxon>Pseudomonadati</taxon>
        <taxon>Pseudomonadota</taxon>
        <taxon>Gammaproteobacteria</taxon>
        <taxon>Alteromonadales</taxon>
        <taxon>Idiomarinaceae</taxon>
        <taxon>Idiomarina</taxon>
    </lineage>
</organism>
<keyword id="KW-0157">Chromophore</keyword>
<keyword id="KW-0238">DNA-binding</keyword>
<keyword id="KW-0274">FAD</keyword>
<keyword id="KW-0285">Flavoprotein</keyword>
<keyword id="KW-1185">Reference proteome</keyword>
<keyword id="KW-0678">Repressor</keyword>
<keyword id="KW-0804">Transcription</keyword>
<keyword id="KW-0805">Transcription regulation</keyword>
<sequence>MNTKQQLVFIMADYRLGLFVFRNDLRVEDNLALYEAAQRSETLICCFCFNPTQNKYGHYGIPAMGKHRFTFLQQSLKQLRTELEMRGQKLIVLTGTFDRILTELISERQVDAIFLSQHQGYYERLQLGLLQQRFPFLPFHETPNNTLFSEQELPFELADLPETFSQFRKKVEPLSRNFSVQPVNALPSLPKNISYPGFKAETLNELASDDFEGGERAALTHLTSYFSGESAGTYKQTRNALDDFSSSTKFSPWLAQGCLSVRQIMAALRAYETEFGENESSYWISFELLWREYFFWYALKHGKRLFAFSGLSGKSPKTSFYSERFQKWCSGNTPYPIVNACMKQLNATGYMSNRGRQLVASCFVHELSLDWRYGAAYFEQQLIDYDVSSNWGNWQYLAGVGADPRGHRQFNLEKQTERYDPDNEFIERWAGDLSGQPIDSVDAADWPVR</sequence>
<protein>
    <recommendedName>
        <fullName>Cryptochrome DASH</fullName>
    </recommendedName>
</protein>
<reference key="1">
    <citation type="journal article" date="2004" name="Proc. Natl. Acad. Sci. U.S.A.">
        <title>Genome sequence of the deep-sea gamma-proteobacterium Idiomarina loihiensis reveals amino acid fermentation as a source of carbon and energy.</title>
        <authorList>
            <person name="Hou S."/>
            <person name="Saw J.H."/>
            <person name="Lee K.S."/>
            <person name="Freitas T.A."/>
            <person name="Belisle C."/>
            <person name="Kawarabayasi Y."/>
            <person name="Donachie S.P."/>
            <person name="Pikina A."/>
            <person name="Galperin M.Y."/>
            <person name="Koonin E.V."/>
            <person name="Makarova K.S."/>
            <person name="Omelchenko M.V."/>
            <person name="Sorokin A."/>
            <person name="Wolf Y.I."/>
            <person name="Li Q.X."/>
            <person name="Keum Y.S."/>
            <person name="Campbell S."/>
            <person name="Denery J."/>
            <person name="Aizawa S."/>
            <person name="Shibata S."/>
            <person name="Malahoff A."/>
            <person name="Alam M."/>
        </authorList>
    </citation>
    <scope>NUCLEOTIDE SEQUENCE [LARGE SCALE GENOMIC DNA]</scope>
    <source>
        <strain>ATCC BAA-735 / DSM 15497 / L2-TR</strain>
    </source>
</reference>
<name>CRYD_IDILO</name>
<proteinExistence type="inferred from homology"/>
<feature type="chain" id="PRO_0000235309" description="Cryptochrome DASH">
    <location>
        <begin position="1"/>
        <end position="449"/>
    </location>
</feature>
<feature type="domain" description="Photolyase/cryptochrome alpha/beta">
    <location>
        <begin position="15"/>
        <end position="147"/>
    </location>
</feature>